<organism>
    <name type="scientific">Acinetobacter baumannii (strain AB0057)</name>
    <dbReference type="NCBI Taxonomy" id="480119"/>
    <lineage>
        <taxon>Bacteria</taxon>
        <taxon>Pseudomonadati</taxon>
        <taxon>Pseudomonadota</taxon>
        <taxon>Gammaproteobacteria</taxon>
        <taxon>Moraxellales</taxon>
        <taxon>Moraxellaceae</taxon>
        <taxon>Acinetobacter</taxon>
        <taxon>Acinetobacter calcoaceticus/baumannii complex</taxon>
    </lineage>
</organism>
<reference key="1">
    <citation type="journal article" date="2008" name="J. Bacteriol.">
        <title>Comparative genome sequence analysis of multidrug-resistant Acinetobacter baumannii.</title>
        <authorList>
            <person name="Adams M.D."/>
            <person name="Goglin K."/>
            <person name="Molyneaux N."/>
            <person name="Hujer K.M."/>
            <person name="Lavender H."/>
            <person name="Jamison J.J."/>
            <person name="MacDonald I.J."/>
            <person name="Martin K.M."/>
            <person name="Russo T."/>
            <person name="Campagnari A.A."/>
            <person name="Hujer A.M."/>
            <person name="Bonomo R.A."/>
            <person name="Gill S.R."/>
        </authorList>
    </citation>
    <scope>NUCLEOTIDE SEQUENCE [LARGE SCALE GENOMIC DNA]</scope>
    <source>
        <strain>AB0057</strain>
    </source>
</reference>
<accession>B7IBV9</accession>
<gene>
    <name evidence="1" type="primary">mutS</name>
    <name type="ordered locus">AB57_1424</name>
</gene>
<feature type="chain" id="PRO_1000117276" description="DNA mismatch repair protein MutS">
    <location>
        <begin position="1"/>
        <end position="881"/>
    </location>
</feature>
<feature type="binding site" evidence="1">
    <location>
        <begin position="627"/>
        <end position="634"/>
    </location>
    <ligand>
        <name>ATP</name>
        <dbReference type="ChEBI" id="CHEBI:30616"/>
    </ligand>
</feature>
<keyword id="KW-0067">ATP-binding</keyword>
<keyword id="KW-0227">DNA damage</keyword>
<keyword id="KW-0234">DNA repair</keyword>
<keyword id="KW-0238">DNA-binding</keyword>
<keyword id="KW-0547">Nucleotide-binding</keyword>
<name>MUTS_ACIB5</name>
<dbReference type="EMBL" id="CP001182">
    <property type="protein sequence ID" value="ACJ40442.1"/>
    <property type="molecule type" value="Genomic_DNA"/>
</dbReference>
<dbReference type="RefSeq" id="WP_001083258.1">
    <property type="nucleotide sequence ID" value="NC_011586.2"/>
</dbReference>
<dbReference type="SMR" id="B7IBV9"/>
<dbReference type="KEGG" id="abn:AB57_1424"/>
<dbReference type="HOGENOM" id="CLU_002472_4_0_6"/>
<dbReference type="Proteomes" id="UP000007094">
    <property type="component" value="Chromosome"/>
</dbReference>
<dbReference type="GO" id="GO:0005829">
    <property type="term" value="C:cytosol"/>
    <property type="evidence" value="ECO:0007669"/>
    <property type="project" value="TreeGrafter"/>
</dbReference>
<dbReference type="GO" id="GO:0005524">
    <property type="term" value="F:ATP binding"/>
    <property type="evidence" value="ECO:0007669"/>
    <property type="project" value="UniProtKB-UniRule"/>
</dbReference>
<dbReference type="GO" id="GO:0140664">
    <property type="term" value="F:ATP-dependent DNA damage sensor activity"/>
    <property type="evidence" value="ECO:0007669"/>
    <property type="project" value="InterPro"/>
</dbReference>
<dbReference type="GO" id="GO:0003684">
    <property type="term" value="F:damaged DNA binding"/>
    <property type="evidence" value="ECO:0007669"/>
    <property type="project" value="UniProtKB-UniRule"/>
</dbReference>
<dbReference type="GO" id="GO:0030983">
    <property type="term" value="F:mismatched DNA binding"/>
    <property type="evidence" value="ECO:0007669"/>
    <property type="project" value="InterPro"/>
</dbReference>
<dbReference type="GO" id="GO:0006298">
    <property type="term" value="P:mismatch repair"/>
    <property type="evidence" value="ECO:0007669"/>
    <property type="project" value="UniProtKB-UniRule"/>
</dbReference>
<dbReference type="FunFam" id="1.10.1420.10:FF:000002">
    <property type="entry name" value="DNA mismatch repair protein MutS"/>
    <property type="match status" value="1"/>
</dbReference>
<dbReference type="FunFam" id="3.40.1170.10:FF:000001">
    <property type="entry name" value="DNA mismatch repair protein MutS"/>
    <property type="match status" value="1"/>
</dbReference>
<dbReference type="FunFam" id="3.40.50.300:FF:000870">
    <property type="entry name" value="MutS protein homolog 4"/>
    <property type="match status" value="1"/>
</dbReference>
<dbReference type="Gene3D" id="1.10.1420.10">
    <property type="match status" value="2"/>
</dbReference>
<dbReference type="Gene3D" id="6.10.140.430">
    <property type="match status" value="1"/>
</dbReference>
<dbReference type="Gene3D" id="3.40.1170.10">
    <property type="entry name" value="DNA repair protein MutS, domain I"/>
    <property type="match status" value="1"/>
</dbReference>
<dbReference type="Gene3D" id="3.30.420.110">
    <property type="entry name" value="MutS, connector domain"/>
    <property type="match status" value="1"/>
</dbReference>
<dbReference type="Gene3D" id="3.40.50.300">
    <property type="entry name" value="P-loop containing nucleotide triphosphate hydrolases"/>
    <property type="match status" value="1"/>
</dbReference>
<dbReference type="HAMAP" id="MF_00096">
    <property type="entry name" value="MutS"/>
    <property type="match status" value="1"/>
</dbReference>
<dbReference type="InterPro" id="IPR005748">
    <property type="entry name" value="DNA_mismatch_repair_MutS"/>
</dbReference>
<dbReference type="InterPro" id="IPR007695">
    <property type="entry name" value="DNA_mismatch_repair_MutS-lik_N"/>
</dbReference>
<dbReference type="InterPro" id="IPR017261">
    <property type="entry name" value="DNA_mismatch_repair_MutS/MSH"/>
</dbReference>
<dbReference type="InterPro" id="IPR000432">
    <property type="entry name" value="DNA_mismatch_repair_MutS_C"/>
</dbReference>
<dbReference type="InterPro" id="IPR007861">
    <property type="entry name" value="DNA_mismatch_repair_MutS_clamp"/>
</dbReference>
<dbReference type="InterPro" id="IPR007696">
    <property type="entry name" value="DNA_mismatch_repair_MutS_core"/>
</dbReference>
<dbReference type="InterPro" id="IPR016151">
    <property type="entry name" value="DNA_mismatch_repair_MutS_N"/>
</dbReference>
<dbReference type="InterPro" id="IPR036187">
    <property type="entry name" value="DNA_mismatch_repair_MutS_sf"/>
</dbReference>
<dbReference type="InterPro" id="IPR007860">
    <property type="entry name" value="DNA_mmatch_repair_MutS_con_dom"/>
</dbReference>
<dbReference type="InterPro" id="IPR045076">
    <property type="entry name" value="MutS"/>
</dbReference>
<dbReference type="InterPro" id="IPR036678">
    <property type="entry name" value="MutS_con_dom_sf"/>
</dbReference>
<dbReference type="InterPro" id="IPR027417">
    <property type="entry name" value="P-loop_NTPase"/>
</dbReference>
<dbReference type="NCBIfam" id="TIGR01070">
    <property type="entry name" value="mutS1"/>
    <property type="match status" value="1"/>
</dbReference>
<dbReference type="NCBIfam" id="NF003810">
    <property type="entry name" value="PRK05399.1"/>
    <property type="match status" value="1"/>
</dbReference>
<dbReference type="PANTHER" id="PTHR11361:SF34">
    <property type="entry name" value="DNA MISMATCH REPAIR PROTEIN MSH1, MITOCHONDRIAL"/>
    <property type="match status" value="1"/>
</dbReference>
<dbReference type="PANTHER" id="PTHR11361">
    <property type="entry name" value="DNA MISMATCH REPAIR PROTEIN MUTS FAMILY MEMBER"/>
    <property type="match status" value="1"/>
</dbReference>
<dbReference type="Pfam" id="PF01624">
    <property type="entry name" value="MutS_I"/>
    <property type="match status" value="1"/>
</dbReference>
<dbReference type="Pfam" id="PF05188">
    <property type="entry name" value="MutS_II"/>
    <property type="match status" value="1"/>
</dbReference>
<dbReference type="Pfam" id="PF05192">
    <property type="entry name" value="MutS_III"/>
    <property type="match status" value="1"/>
</dbReference>
<dbReference type="Pfam" id="PF05190">
    <property type="entry name" value="MutS_IV"/>
    <property type="match status" value="1"/>
</dbReference>
<dbReference type="Pfam" id="PF00488">
    <property type="entry name" value="MutS_V"/>
    <property type="match status" value="1"/>
</dbReference>
<dbReference type="PIRSF" id="PIRSF037677">
    <property type="entry name" value="DNA_mis_repair_Msh6"/>
    <property type="match status" value="1"/>
</dbReference>
<dbReference type="SMART" id="SM00534">
    <property type="entry name" value="MUTSac"/>
    <property type="match status" value="1"/>
</dbReference>
<dbReference type="SMART" id="SM00533">
    <property type="entry name" value="MUTSd"/>
    <property type="match status" value="1"/>
</dbReference>
<dbReference type="SUPFAM" id="SSF55271">
    <property type="entry name" value="DNA repair protein MutS, domain I"/>
    <property type="match status" value="1"/>
</dbReference>
<dbReference type="SUPFAM" id="SSF53150">
    <property type="entry name" value="DNA repair protein MutS, domain II"/>
    <property type="match status" value="1"/>
</dbReference>
<dbReference type="SUPFAM" id="SSF48334">
    <property type="entry name" value="DNA repair protein MutS, domain III"/>
    <property type="match status" value="1"/>
</dbReference>
<dbReference type="SUPFAM" id="SSF52540">
    <property type="entry name" value="P-loop containing nucleoside triphosphate hydrolases"/>
    <property type="match status" value="1"/>
</dbReference>
<dbReference type="PROSITE" id="PS00486">
    <property type="entry name" value="DNA_MISMATCH_REPAIR_2"/>
    <property type="match status" value="1"/>
</dbReference>
<comment type="function">
    <text evidence="1">This protein is involved in the repair of mismatches in DNA. It is possible that it carries out the mismatch recognition step. This protein has a weak ATPase activity.</text>
</comment>
<comment type="similarity">
    <text evidence="1">Belongs to the DNA mismatch repair MutS family.</text>
</comment>
<proteinExistence type="inferred from homology"/>
<protein>
    <recommendedName>
        <fullName evidence="1">DNA mismatch repair protein MutS</fullName>
    </recommendedName>
</protein>
<sequence length="881" mass="97893">MNSAEIMADLSNHTPMMQQYLKVKKDYQHALLFYRMGDFYELFFEDAHLAAKLLGITLTHRGKANGNPIPMAGVPYHSAEGYLARLVKAGRTVAICEQVGEVTGKGPVERKVVRILTPGTLTDDALLTSYQSSNLVALCIHQNQIGFALLDLSAGIFKVQQQDYKPEQLPIELARLMPSEILIDEDLVDPNIIEQIKKHLDCPVTKRPNVDFNLNNAQKTLCDQFSVSTLSGFGLDPLPLAKAAAAALIHYAKETQKTALPHIRSILLEQSSDFIALDPITRRNLEIIEPLFEHGTSLFQLVNDCQTAMGGRLLSRTLMQPVRDTALLDARLDAIEQLIQGYHESPVRLVLKEIGDIERVLSRVALGSARPRDLVQLRHACAQIPFLRNALAPVVQAKKSKLLGQLDQELGDFKSLHQHLMAAIVENPPVLLRDGNVIAEGYDAELDELRQIRDHAGQFLIDLEIKERERTGISTLKIGYNRVSGYYIELTRAQAEQAPADYIRRQTLKNAERYITPELKSFEDKVLSSESRALAREKALFEALLENLRENIAHLQMMSSAIAQIDVIANFAHQARLNNWARPEFTPETGIKIQGGRHPVVEALSKAPFTPNDTFLDVQHRMAIITGPNMGGKSTFMRQTALISLLAYCGSYVPARAAKLGPIDRIFTRIGSADDLSTGKSTFMVEMTETSQILHHATNQSLVLMDEVGRGTSTYDGLSLAWACVVDLTKRVKCLCLFATHYFELTELGSEPGIDNYHVTAQELNGNLILLHKVQQGPASQSHGLQVAKLAGIPANVIKEAQKRLRILEKQQQQHLQTSVQSDLFATLDSEVTPSTQVIEKVIEVEVSSPALDLLKQIEVDNLTPRQALEQLYELKAALNS</sequence>
<evidence type="ECO:0000255" key="1">
    <source>
        <dbReference type="HAMAP-Rule" id="MF_00096"/>
    </source>
</evidence>